<sequence>MKRAHLFVVGVYLLSSCRAEEGLNFPTYDGKDRVVSLSEKNFKQILKKYDLLCLYYHAPVSADKVAQKQFQLKEIVLELVAQVLEHKEIGFVMVDAKKEAKLAKKLGFDEEGSLYILKGDRTIEFDGEFAADVLVEFLLDLIEDPVEIINSKLEVQAFERIEDHIKLIGFFKSADSEYYKAFEEAAEHFQPYIKFFATFDKGVAKKLSLKMNEVDFYEPFMDEPTPIPNKPYTEEELVEFVKEHQRPTLRRLRPEDMFETWEDDLNGIHIVPFAEKSDPDGYEFLEILKQVARDNTDNPDLSIVWIDPDDFPLLVAYWEKTFKIDLFKPQIGVVNVTDADSVWMEIPDDDDLPTAEELEDWIEDVLSGKINTEDDDNEDEDDDDDNDDDDDDNGNSDEEDNDDSDEDDE</sequence>
<gene>
    <name type="primary">CASQ2</name>
</gene>
<proteinExistence type="evidence at protein level"/>
<evidence type="ECO:0000250" key="1">
    <source>
        <dbReference type="UniProtKB" id="O09161"/>
    </source>
</evidence>
<evidence type="ECO:0000250" key="2">
    <source>
        <dbReference type="UniProtKB" id="O14958"/>
    </source>
</evidence>
<evidence type="ECO:0000255" key="3"/>
<evidence type="ECO:0000256" key="4">
    <source>
        <dbReference type="SAM" id="MobiDB-lite"/>
    </source>
</evidence>
<evidence type="ECO:0000269" key="5">
    <source>
    </source>
</evidence>
<evidence type="ECO:0000305" key="6"/>
<organism>
    <name type="scientific">Oryctolagus cuniculus</name>
    <name type="common">Rabbit</name>
    <dbReference type="NCBI Taxonomy" id="9986"/>
    <lineage>
        <taxon>Eukaryota</taxon>
        <taxon>Metazoa</taxon>
        <taxon>Chordata</taxon>
        <taxon>Craniata</taxon>
        <taxon>Vertebrata</taxon>
        <taxon>Euteleostomi</taxon>
        <taxon>Mammalia</taxon>
        <taxon>Eutheria</taxon>
        <taxon>Euarchontoglires</taxon>
        <taxon>Glires</taxon>
        <taxon>Lagomorpha</taxon>
        <taxon>Leporidae</taxon>
        <taxon>Oryctolagus</taxon>
    </lineage>
</organism>
<reference key="1">
    <citation type="journal article" date="1991" name="Gene">
        <title>Cloning and characterization of the gene encoding rabbit cardiac calsequestrin.</title>
        <authorList>
            <person name="Arai M."/>
            <person name="Alpert N.R."/>
            <person name="Periasamy M."/>
        </authorList>
    </citation>
    <scope>NUCLEOTIDE SEQUENCE [MRNA]</scope>
    <source>
        <strain>New Zealand white</strain>
    </source>
</reference>
<reference key="2">
    <citation type="journal article" date="1987" name="Biochemistry">
        <title>Characterization of cardiac calsequestrin.</title>
        <authorList>
            <person name="Slupsky J.R."/>
            <person name="Ohnishi M."/>
            <person name="Carpenter M.R."/>
            <person name="Reithmeier R.A.F."/>
        </authorList>
    </citation>
    <scope>PROTEIN SEQUENCE OF 20-49</scope>
    <scope>TISSUE SPECIFICITY</scope>
</reference>
<keyword id="KW-0106">Calcium</keyword>
<keyword id="KW-0903">Direct protein sequencing</keyword>
<keyword id="KW-0325">Glycoprotein</keyword>
<keyword id="KW-0479">Metal-binding</keyword>
<keyword id="KW-0514">Muscle protein</keyword>
<keyword id="KW-0597">Phosphoprotein</keyword>
<keyword id="KW-1185">Reference proteome</keyword>
<keyword id="KW-0703">Sarcoplasmic reticulum</keyword>
<keyword id="KW-0732">Signal</keyword>
<accession>P31235</accession>
<protein>
    <recommendedName>
        <fullName>Calsequestrin-2</fullName>
    </recommendedName>
    <alternativeName>
        <fullName>Calsequestrin, cardiac muscle isoform</fullName>
    </alternativeName>
</protein>
<feature type="signal peptide" evidence="5">
    <location>
        <begin position="1"/>
        <end position="19"/>
    </location>
</feature>
<feature type="chain" id="PRO_0000004220" description="Calsequestrin-2">
    <location>
        <begin position="20"/>
        <end position="409"/>
    </location>
</feature>
<feature type="region of interest" description="Disordered" evidence="4">
    <location>
        <begin position="364"/>
        <end position="409"/>
    </location>
</feature>
<feature type="compositionally biased region" description="Acidic residues" evidence="4">
    <location>
        <begin position="373"/>
        <end position="409"/>
    </location>
</feature>
<feature type="modified residue" description="Phosphotyrosine" evidence="1">
    <location>
        <position position="282"/>
    </location>
</feature>
<feature type="glycosylation site" description="N-linked (GlcNAc...) asparagine" evidence="3">
    <location>
        <position position="335"/>
    </location>
</feature>
<feature type="sequence conflict" description="In Ref. 2; AA sequence." evidence="6" ref="2">
    <original>I</original>
    <variation>S</variation>
    <location>
        <position position="45"/>
    </location>
</feature>
<name>CASQ2_RABIT</name>
<comment type="function">
    <text evidence="1">Calsequestrin is a high-capacity, moderate affinity, calcium-binding protein and thus acts as an internal calcium store in muscle. Calcium ions are bound by clusters of acidic residues at the protein surface, especially at the interface between subunits. Can bind around 60 Ca(2+) ions. Regulates the release of lumenal Ca(2+) via the calcium release channel RYR2; this plays an important role in triggering muscle contraction. Plays a role in excitation-contraction coupling in the heart and in regulating the rate of heart beats.</text>
</comment>
<comment type="subunit">
    <text evidence="2">Monomer, homodimer and homooligomer. Mostly monomeric in the absence of calcium. Forms higher oligomers in a calcium-dependent manner. Dimers associate to form tetramers, that then form linear homomer chains. Interacts with ASPH and TRDN (By similarity).</text>
</comment>
<comment type="subcellular location">
    <subcellularLocation>
        <location evidence="1">Sarcoplasmic reticulum lumen</location>
    </subcellularLocation>
    <text evidence="1">This isoform of calsequestrin occurs in the sarcoplasmic reticulum's terminal cisternae luminal spaces of cardiac and slow skeletal muscle cells.</text>
</comment>
<comment type="tissue specificity">
    <text evidence="5">Detected in heart muscle (at protein level).</text>
</comment>
<comment type="PTM">
    <text evidence="2">Phosphorylation in the C-terminus, probably by CK2, moderately increases calcium buffering capacity.</text>
</comment>
<comment type="PTM">
    <text evidence="2">N-glycosylated.</text>
</comment>
<comment type="similarity">
    <text evidence="6">Belongs to the calsequestrin family.</text>
</comment>
<dbReference type="EMBL" id="X55040">
    <property type="protein sequence ID" value="CAA38880.1"/>
    <property type="molecule type" value="mRNA"/>
</dbReference>
<dbReference type="PIR" id="JQ1396">
    <property type="entry name" value="JQ1396"/>
</dbReference>
<dbReference type="RefSeq" id="NP_001095161.1">
    <property type="nucleotide sequence ID" value="NM_001101691.1"/>
</dbReference>
<dbReference type="SMR" id="P31235"/>
<dbReference type="FunCoup" id="P31235">
    <property type="interactions" value="17"/>
</dbReference>
<dbReference type="STRING" id="9986.ENSOCUP00000009133"/>
<dbReference type="GlyCosmos" id="P31235">
    <property type="glycosylation" value="1 site, No reported glycans"/>
</dbReference>
<dbReference type="PaxDb" id="9986-ENSOCUP00000009133"/>
<dbReference type="GeneID" id="100009261"/>
<dbReference type="KEGG" id="ocu:100009261"/>
<dbReference type="CTD" id="845"/>
<dbReference type="eggNOG" id="ENOG502QU4Q">
    <property type="taxonomic scope" value="Eukaryota"/>
</dbReference>
<dbReference type="InParanoid" id="P31235"/>
<dbReference type="OrthoDB" id="10038131at2759"/>
<dbReference type="Proteomes" id="UP000001811">
    <property type="component" value="Unplaced"/>
</dbReference>
<dbReference type="GO" id="GO:0016529">
    <property type="term" value="C:sarcoplasmic reticulum"/>
    <property type="evidence" value="ECO:0000314"/>
    <property type="project" value="CAFA"/>
</dbReference>
<dbReference type="GO" id="GO:0033018">
    <property type="term" value="C:sarcoplasmic reticulum lumen"/>
    <property type="evidence" value="ECO:0007669"/>
    <property type="project" value="UniProtKB-SubCell"/>
</dbReference>
<dbReference type="GO" id="GO:0014802">
    <property type="term" value="C:terminal cisterna"/>
    <property type="evidence" value="ECO:0000314"/>
    <property type="project" value="AgBase"/>
</dbReference>
<dbReference type="GO" id="GO:0030018">
    <property type="term" value="C:Z disc"/>
    <property type="evidence" value="ECO:0007669"/>
    <property type="project" value="TreeGrafter"/>
</dbReference>
<dbReference type="GO" id="GO:0005509">
    <property type="term" value="F:calcium ion binding"/>
    <property type="evidence" value="ECO:0000314"/>
    <property type="project" value="CAFA"/>
</dbReference>
<dbReference type="GO" id="GO:0010881">
    <property type="term" value="P:regulation of cardiac muscle contraction by regulation of the release of sequestered calcium ion"/>
    <property type="evidence" value="ECO:0007669"/>
    <property type="project" value="TreeGrafter"/>
</dbReference>
<dbReference type="CDD" id="cd03074">
    <property type="entry name" value="PDI_b'_Calsequestrin_C"/>
    <property type="match status" value="1"/>
</dbReference>
<dbReference type="CDD" id="cd03066">
    <property type="entry name" value="PDI_b_Calsequestrin_middle"/>
    <property type="match status" value="1"/>
</dbReference>
<dbReference type="CDD" id="cd03065">
    <property type="entry name" value="PDI_b_Calsequestrin_N"/>
    <property type="match status" value="1"/>
</dbReference>
<dbReference type="FunFam" id="3.40.30.10:FF:000031">
    <property type="entry name" value="Calsequestrin"/>
    <property type="match status" value="1"/>
</dbReference>
<dbReference type="FunFam" id="3.40.30.10:FF:000033">
    <property type="entry name" value="Calsequestrin"/>
    <property type="match status" value="1"/>
</dbReference>
<dbReference type="FunFam" id="3.40.30.10:FF:000047">
    <property type="entry name" value="Calsequestrin"/>
    <property type="match status" value="1"/>
</dbReference>
<dbReference type="Gene3D" id="3.40.30.10">
    <property type="entry name" value="Glutaredoxin"/>
    <property type="match status" value="3"/>
</dbReference>
<dbReference type="InterPro" id="IPR001393">
    <property type="entry name" value="Calsequestrin"/>
</dbReference>
<dbReference type="InterPro" id="IPR041860">
    <property type="entry name" value="Calsequestrin_C"/>
</dbReference>
<dbReference type="InterPro" id="IPR018233">
    <property type="entry name" value="Calsequestrin_CS"/>
</dbReference>
<dbReference type="InterPro" id="IPR041858">
    <property type="entry name" value="Calsequestrin_middle_dom"/>
</dbReference>
<dbReference type="InterPro" id="IPR041859">
    <property type="entry name" value="Calsequestrin_N"/>
</dbReference>
<dbReference type="InterPro" id="IPR036249">
    <property type="entry name" value="Thioredoxin-like_sf"/>
</dbReference>
<dbReference type="PANTHER" id="PTHR10033">
    <property type="entry name" value="CALSEQUESTRIN"/>
    <property type="match status" value="1"/>
</dbReference>
<dbReference type="PANTHER" id="PTHR10033:SF15">
    <property type="entry name" value="CALSEQUESTRIN-2"/>
    <property type="match status" value="1"/>
</dbReference>
<dbReference type="Pfam" id="PF01216">
    <property type="entry name" value="Calsequestrin"/>
    <property type="match status" value="1"/>
</dbReference>
<dbReference type="PRINTS" id="PR00312">
    <property type="entry name" value="CALSEQUESTRN"/>
</dbReference>
<dbReference type="SUPFAM" id="SSF52833">
    <property type="entry name" value="Thioredoxin-like"/>
    <property type="match status" value="3"/>
</dbReference>
<dbReference type="PROSITE" id="PS00863">
    <property type="entry name" value="CALSEQUESTRIN_1"/>
    <property type="match status" value="1"/>
</dbReference>
<dbReference type="PROSITE" id="PS00864">
    <property type="entry name" value="CALSEQUESTRIN_2"/>
    <property type="match status" value="1"/>
</dbReference>